<organism>
    <name type="scientific">Alkaliphilus metalliredigens (strain QYMF)</name>
    <dbReference type="NCBI Taxonomy" id="293826"/>
    <lineage>
        <taxon>Bacteria</taxon>
        <taxon>Bacillati</taxon>
        <taxon>Bacillota</taxon>
        <taxon>Clostridia</taxon>
        <taxon>Peptostreptococcales</taxon>
        <taxon>Natronincolaceae</taxon>
        <taxon>Alkaliphilus</taxon>
    </lineage>
</organism>
<protein>
    <recommendedName>
        <fullName evidence="1">Large ribosomal subunit protein uL29</fullName>
    </recommendedName>
    <alternativeName>
        <fullName evidence="2">50S ribosomal protein L29</fullName>
    </alternativeName>
</protein>
<accession>A6TWH4</accession>
<feature type="chain" id="PRO_1000059961" description="Large ribosomal subunit protein uL29">
    <location>
        <begin position="1"/>
        <end position="67"/>
    </location>
</feature>
<keyword id="KW-1185">Reference proteome</keyword>
<keyword id="KW-0687">Ribonucleoprotein</keyword>
<keyword id="KW-0689">Ribosomal protein</keyword>
<proteinExistence type="inferred from homology"/>
<name>RL29_ALKMQ</name>
<sequence length="67" mass="7966">MKTNELRDMTDVELNQKLSDLKSELFNLRFQLATGQLENPLRIRNVRKDIARLKTILRENELKQVRA</sequence>
<dbReference type="EMBL" id="CP000724">
    <property type="protein sequence ID" value="ABR50542.1"/>
    <property type="molecule type" value="Genomic_DNA"/>
</dbReference>
<dbReference type="RefSeq" id="WP_012065433.1">
    <property type="nucleotide sequence ID" value="NC_009633.1"/>
</dbReference>
<dbReference type="SMR" id="A6TWH4"/>
<dbReference type="STRING" id="293826.Amet_4470"/>
<dbReference type="KEGG" id="amt:Amet_4470"/>
<dbReference type="eggNOG" id="COG0255">
    <property type="taxonomic scope" value="Bacteria"/>
</dbReference>
<dbReference type="HOGENOM" id="CLU_158491_5_2_9"/>
<dbReference type="OrthoDB" id="9815192at2"/>
<dbReference type="Proteomes" id="UP000001572">
    <property type="component" value="Chromosome"/>
</dbReference>
<dbReference type="GO" id="GO:0022625">
    <property type="term" value="C:cytosolic large ribosomal subunit"/>
    <property type="evidence" value="ECO:0007669"/>
    <property type="project" value="TreeGrafter"/>
</dbReference>
<dbReference type="GO" id="GO:0003735">
    <property type="term" value="F:structural constituent of ribosome"/>
    <property type="evidence" value="ECO:0007669"/>
    <property type="project" value="InterPro"/>
</dbReference>
<dbReference type="GO" id="GO:0006412">
    <property type="term" value="P:translation"/>
    <property type="evidence" value="ECO:0007669"/>
    <property type="project" value="UniProtKB-UniRule"/>
</dbReference>
<dbReference type="CDD" id="cd00427">
    <property type="entry name" value="Ribosomal_L29_HIP"/>
    <property type="match status" value="1"/>
</dbReference>
<dbReference type="FunFam" id="1.10.287.310:FF:000001">
    <property type="entry name" value="50S ribosomal protein L29"/>
    <property type="match status" value="1"/>
</dbReference>
<dbReference type="Gene3D" id="1.10.287.310">
    <property type="match status" value="1"/>
</dbReference>
<dbReference type="HAMAP" id="MF_00374">
    <property type="entry name" value="Ribosomal_uL29"/>
    <property type="match status" value="1"/>
</dbReference>
<dbReference type="InterPro" id="IPR050063">
    <property type="entry name" value="Ribosomal_protein_uL29"/>
</dbReference>
<dbReference type="InterPro" id="IPR001854">
    <property type="entry name" value="Ribosomal_uL29"/>
</dbReference>
<dbReference type="InterPro" id="IPR018254">
    <property type="entry name" value="Ribosomal_uL29_CS"/>
</dbReference>
<dbReference type="InterPro" id="IPR036049">
    <property type="entry name" value="Ribosomal_uL29_sf"/>
</dbReference>
<dbReference type="NCBIfam" id="TIGR00012">
    <property type="entry name" value="L29"/>
    <property type="match status" value="1"/>
</dbReference>
<dbReference type="PANTHER" id="PTHR10916">
    <property type="entry name" value="60S RIBOSOMAL PROTEIN L35/50S RIBOSOMAL PROTEIN L29"/>
    <property type="match status" value="1"/>
</dbReference>
<dbReference type="PANTHER" id="PTHR10916:SF0">
    <property type="entry name" value="LARGE RIBOSOMAL SUBUNIT PROTEIN UL29C"/>
    <property type="match status" value="1"/>
</dbReference>
<dbReference type="Pfam" id="PF00831">
    <property type="entry name" value="Ribosomal_L29"/>
    <property type="match status" value="1"/>
</dbReference>
<dbReference type="SUPFAM" id="SSF46561">
    <property type="entry name" value="Ribosomal protein L29 (L29p)"/>
    <property type="match status" value="1"/>
</dbReference>
<dbReference type="PROSITE" id="PS00579">
    <property type="entry name" value="RIBOSOMAL_L29"/>
    <property type="match status" value="1"/>
</dbReference>
<evidence type="ECO:0000255" key="1">
    <source>
        <dbReference type="HAMAP-Rule" id="MF_00374"/>
    </source>
</evidence>
<evidence type="ECO:0000305" key="2"/>
<gene>
    <name evidence="1" type="primary">rpmC</name>
    <name type="ordered locus">Amet_4470</name>
</gene>
<reference key="1">
    <citation type="journal article" date="2016" name="Genome Announc.">
        <title>Complete genome sequence of Alkaliphilus metalliredigens strain QYMF, an alkaliphilic and metal-reducing bacterium isolated from borax-contaminated leachate ponds.</title>
        <authorList>
            <person name="Hwang C."/>
            <person name="Copeland A."/>
            <person name="Lucas S."/>
            <person name="Lapidus A."/>
            <person name="Barry K."/>
            <person name="Detter J.C."/>
            <person name="Glavina Del Rio T."/>
            <person name="Hammon N."/>
            <person name="Israni S."/>
            <person name="Dalin E."/>
            <person name="Tice H."/>
            <person name="Pitluck S."/>
            <person name="Chertkov O."/>
            <person name="Brettin T."/>
            <person name="Bruce D."/>
            <person name="Han C."/>
            <person name="Schmutz J."/>
            <person name="Larimer F."/>
            <person name="Land M.L."/>
            <person name="Hauser L."/>
            <person name="Kyrpides N."/>
            <person name="Mikhailova N."/>
            <person name="Ye Q."/>
            <person name="Zhou J."/>
            <person name="Richardson P."/>
            <person name="Fields M.W."/>
        </authorList>
    </citation>
    <scope>NUCLEOTIDE SEQUENCE [LARGE SCALE GENOMIC DNA]</scope>
    <source>
        <strain>QYMF</strain>
    </source>
</reference>
<comment type="similarity">
    <text evidence="1">Belongs to the universal ribosomal protein uL29 family.</text>
</comment>